<proteinExistence type="evidence at transcript level"/>
<reference key="1">
    <citation type="submission" date="2006-01" db="EMBL/GenBank/DDBJ databases">
        <authorList>
            <consortium name="NIH - Mammalian Gene Collection (MGC) project"/>
        </authorList>
    </citation>
    <scope>NUCLEOTIDE SEQUENCE [LARGE SCALE MRNA]</scope>
    <source>
        <strain>Hereford</strain>
        <tissue>Heart ventricle</tissue>
    </source>
</reference>
<feature type="chain" id="PRO_0000262912" description="Caveolin-3">
    <location>
        <begin position="1"/>
        <end position="151"/>
    </location>
</feature>
<feature type="topological domain" description="Cytoplasmic" evidence="6">
    <location>
        <begin position="1"/>
        <end position="83"/>
    </location>
</feature>
<feature type="intramembrane region" description="Helical" evidence="6">
    <location>
        <begin position="84"/>
        <end position="104"/>
    </location>
</feature>
<feature type="topological domain" description="Cytoplasmic" evidence="6">
    <location>
        <begin position="105"/>
        <end position="151"/>
    </location>
</feature>
<feature type="region of interest" description="Required for interaction with DAG1" evidence="1">
    <location>
        <begin position="64"/>
        <end position="114"/>
    </location>
</feature>
<feature type="cross-link" description="Glycyl lysine isopeptide (Lys-Gly) (interchain with G-Cter in SUMO3)" evidence="1">
    <location>
        <position position="38"/>
    </location>
</feature>
<dbReference type="EMBL" id="BC112776">
    <property type="protein sequence ID" value="AAI12777.1"/>
    <property type="molecule type" value="mRNA"/>
</dbReference>
<dbReference type="RefSeq" id="NP_001040023.1">
    <property type="nucleotide sequence ID" value="NM_001046558.1"/>
</dbReference>
<dbReference type="SMR" id="Q2KI43"/>
<dbReference type="FunCoup" id="Q2KI43">
    <property type="interactions" value="414"/>
</dbReference>
<dbReference type="STRING" id="9913.ENSBTAP00000030761"/>
<dbReference type="PaxDb" id="9913-ENSBTAP00000030761"/>
<dbReference type="Ensembl" id="ENSBTAT00000030791.6">
    <property type="protein sequence ID" value="ENSBTAP00000030761.4"/>
    <property type="gene ID" value="ENSBTAG00000022699.6"/>
</dbReference>
<dbReference type="GeneID" id="615310"/>
<dbReference type="KEGG" id="bta:615310"/>
<dbReference type="CTD" id="859"/>
<dbReference type="VEuPathDB" id="HostDB:ENSBTAG00000022699"/>
<dbReference type="VGNC" id="VGNC:26801">
    <property type="gene designation" value="CAV3"/>
</dbReference>
<dbReference type="eggNOG" id="ENOG502RYU9">
    <property type="taxonomic scope" value="Eukaryota"/>
</dbReference>
<dbReference type="GeneTree" id="ENSGT00950000183006"/>
<dbReference type="HOGENOM" id="CLU_102582_0_0_1"/>
<dbReference type="InParanoid" id="Q2KI43"/>
<dbReference type="OMA" id="MCSSIKV"/>
<dbReference type="OrthoDB" id="5917823at2759"/>
<dbReference type="TreeFam" id="TF315736"/>
<dbReference type="Proteomes" id="UP000009136">
    <property type="component" value="Chromosome 22"/>
</dbReference>
<dbReference type="Bgee" id="ENSBTAG00000022699">
    <property type="expression patterns" value="Expressed in cardiac ventricle and 58 other cell types or tissues"/>
</dbReference>
<dbReference type="GO" id="GO:0005901">
    <property type="term" value="C:caveola"/>
    <property type="evidence" value="ECO:0000314"/>
    <property type="project" value="BHF-UCL"/>
</dbReference>
<dbReference type="GO" id="GO:0016010">
    <property type="term" value="C:dystrophin-associated glycoprotein complex"/>
    <property type="evidence" value="ECO:0007669"/>
    <property type="project" value="Ensembl"/>
</dbReference>
<dbReference type="GO" id="GO:0005783">
    <property type="term" value="C:endoplasmic reticulum"/>
    <property type="evidence" value="ECO:0007669"/>
    <property type="project" value="Ensembl"/>
</dbReference>
<dbReference type="GO" id="GO:0000139">
    <property type="term" value="C:Golgi membrane"/>
    <property type="evidence" value="ECO:0007669"/>
    <property type="project" value="UniProtKB-SubCell"/>
</dbReference>
<dbReference type="GO" id="GO:0042383">
    <property type="term" value="C:sarcolemma"/>
    <property type="evidence" value="ECO:0000314"/>
    <property type="project" value="BHF-UCL"/>
</dbReference>
<dbReference type="GO" id="GO:0030315">
    <property type="term" value="C:T-tubule"/>
    <property type="evidence" value="ECO:0007669"/>
    <property type="project" value="Ensembl"/>
</dbReference>
<dbReference type="GO" id="GO:0043014">
    <property type="term" value="F:alpha-tubulin binding"/>
    <property type="evidence" value="ECO:0007669"/>
    <property type="project" value="Ensembl"/>
</dbReference>
<dbReference type="GO" id="GO:0005246">
    <property type="term" value="F:calcium channel regulator activity"/>
    <property type="evidence" value="ECO:0007669"/>
    <property type="project" value="Ensembl"/>
</dbReference>
<dbReference type="GO" id="GO:0071253">
    <property type="term" value="F:connexin binding"/>
    <property type="evidence" value="ECO:0007669"/>
    <property type="project" value="Ensembl"/>
</dbReference>
<dbReference type="GO" id="GO:0060090">
    <property type="term" value="F:molecular adaptor activity"/>
    <property type="evidence" value="ECO:0000318"/>
    <property type="project" value="GO_Central"/>
</dbReference>
<dbReference type="GO" id="GO:0044877">
    <property type="term" value="F:protein-containing complex binding"/>
    <property type="evidence" value="ECO:0007669"/>
    <property type="project" value="Ensembl"/>
</dbReference>
<dbReference type="GO" id="GO:0017080">
    <property type="term" value="F:sodium channel regulator activity"/>
    <property type="evidence" value="ECO:0007669"/>
    <property type="project" value="Ensembl"/>
</dbReference>
<dbReference type="GO" id="GO:0044325">
    <property type="term" value="F:transmembrane transporter binding"/>
    <property type="evidence" value="ECO:0000318"/>
    <property type="project" value="GO_Central"/>
</dbReference>
<dbReference type="GO" id="GO:0007015">
    <property type="term" value="P:actin filament organization"/>
    <property type="evidence" value="ECO:0007669"/>
    <property type="project" value="Ensembl"/>
</dbReference>
<dbReference type="GO" id="GO:0006816">
    <property type="term" value="P:calcium ion transport"/>
    <property type="evidence" value="ECO:0007669"/>
    <property type="project" value="Ensembl"/>
</dbReference>
<dbReference type="GO" id="GO:0055013">
    <property type="term" value="P:cardiac muscle cell development"/>
    <property type="evidence" value="ECO:0007669"/>
    <property type="project" value="Ensembl"/>
</dbReference>
<dbReference type="GO" id="GO:0003300">
    <property type="term" value="P:cardiac muscle hypertrophy"/>
    <property type="evidence" value="ECO:0007669"/>
    <property type="project" value="Ensembl"/>
</dbReference>
<dbReference type="GO" id="GO:0070836">
    <property type="term" value="P:caveola assembly"/>
    <property type="evidence" value="ECO:0000318"/>
    <property type="project" value="GO_Central"/>
</dbReference>
<dbReference type="GO" id="GO:0030154">
    <property type="term" value="P:cell differentiation"/>
    <property type="evidence" value="ECO:0000318"/>
    <property type="project" value="GO_Central"/>
</dbReference>
<dbReference type="GO" id="GO:0042632">
    <property type="term" value="P:cholesterol homeostasis"/>
    <property type="evidence" value="ECO:0007669"/>
    <property type="project" value="Ensembl"/>
</dbReference>
<dbReference type="GO" id="GO:0031122">
    <property type="term" value="P:cytoplasmic microtubule organization"/>
    <property type="evidence" value="ECO:0007669"/>
    <property type="project" value="Ensembl"/>
</dbReference>
<dbReference type="GO" id="GO:0035995">
    <property type="term" value="P:detection of muscle stretch"/>
    <property type="evidence" value="ECO:0007669"/>
    <property type="project" value="Ensembl"/>
</dbReference>
<dbReference type="GO" id="GO:0051649">
    <property type="term" value="P:establishment of localization in cell"/>
    <property type="evidence" value="ECO:0007669"/>
    <property type="project" value="Ensembl"/>
</dbReference>
<dbReference type="GO" id="GO:0042593">
    <property type="term" value="P:glucose homeostasis"/>
    <property type="evidence" value="ECO:0007669"/>
    <property type="project" value="Ensembl"/>
</dbReference>
<dbReference type="GO" id="GO:0060347">
    <property type="term" value="P:heart trabecula formation"/>
    <property type="evidence" value="ECO:0007669"/>
    <property type="project" value="Ensembl"/>
</dbReference>
<dbReference type="GO" id="GO:0000165">
    <property type="term" value="P:MAPK cascade"/>
    <property type="evidence" value="ECO:0007669"/>
    <property type="project" value="Ensembl"/>
</dbReference>
<dbReference type="GO" id="GO:0007520">
    <property type="term" value="P:myoblast fusion"/>
    <property type="evidence" value="ECO:0007669"/>
    <property type="project" value="Ensembl"/>
</dbReference>
<dbReference type="GO" id="GO:0051926">
    <property type="term" value="P:negative regulation of calcium ion transport"/>
    <property type="evidence" value="ECO:0007669"/>
    <property type="project" value="Ensembl"/>
</dbReference>
<dbReference type="GO" id="GO:0010614">
    <property type="term" value="P:negative regulation of cardiac muscle hypertrophy"/>
    <property type="evidence" value="ECO:0007669"/>
    <property type="project" value="Ensembl"/>
</dbReference>
<dbReference type="GO" id="GO:0045792">
    <property type="term" value="P:negative regulation of cell size"/>
    <property type="evidence" value="ECO:0007669"/>
    <property type="project" value="Ensembl"/>
</dbReference>
<dbReference type="GO" id="GO:0043409">
    <property type="term" value="P:negative regulation of MAPK cascade"/>
    <property type="evidence" value="ECO:0007669"/>
    <property type="project" value="Ensembl"/>
</dbReference>
<dbReference type="GO" id="GO:1900826">
    <property type="term" value="P:negative regulation of membrane depolarization during cardiac muscle cell action potential"/>
    <property type="evidence" value="ECO:0007669"/>
    <property type="project" value="Ensembl"/>
</dbReference>
<dbReference type="GO" id="GO:0060299">
    <property type="term" value="P:negative regulation of sarcomere organization"/>
    <property type="evidence" value="ECO:0007669"/>
    <property type="project" value="Ensembl"/>
</dbReference>
<dbReference type="GO" id="GO:0051647">
    <property type="term" value="P:nucleus localization"/>
    <property type="evidence" value="ECO:0007669"/>
    <property type="project" value="Ensembl"/>
</dbReference>
<dbReference type="GO" id="GO:0001778">
    <property type="term" value="P:plasma membrane repair"/>
    <property type="evidence" value="ECO:0007669"/>
    <property type="project" value="Ensembl"/>
</dbReference>
<dbReference type="GO" id="GO:0010831">
    <property type="term" value="P:positive regulation of myotube differentiation"/>
    <property type="evidence" value="ECO:0007669"/>
    <property type="project" value="Ensembl"/>
</dbReference>
<dbReference type="GO" id="GO:0072659">
    <property type="term" value="P:protein localization to plasma membrane"/>
    <property type="evidence" value="ECO:0007669"/>
    <property type="project" value="Ensembl"/>
</dbReference>
<dbReference type="GO" id="GO:0060762">
    <property type="term" value="P:regulation of branching involved in mammary gland duct morphogenesis"/>
    <property type="evidence" value="ECO:0007669"/>
    <property type="project" value="Ensembl"/>
</dbReference>
<dbReference type="GO" id="GO:0090279">
    <property type="term" value="P:regulation of calcium ion import"/>
    <property type="evidence" value="ECO:0007669"/>
    <property type="project" value="Ensembl"/>
</dbReference>
<dbReference type="GO" id="GO:0098909">
    <property type="term" value="P:regulation of cardiac muscle cell action potential involved in regulation of contraction"/>
    <property type="evidence" value="ECO:0007669"/>
    <property type="project" value="Ensembl"/>
</dbReference>
<dbReference type="GO" id="GO:0051480">
    <property type="term" value="P:regulation of cytosolic calcium ion concentration"/>
    <property type="evidence" value="ECO:0000318"/>
    <property type="project" value="GO_Central"/>
</dbReference>
<dbReference type="GO" id="GO:0002027">
    <property type="term" value="P:regulation of heart rate"/>
    <property type="evidence" value="ECO:0007669"/>
    <property type="project" value="Ensembl"/>
</dbReference>
<dbReference type="GO" id="GO:0042391">
    <property type="term" value="P:regulation of membrane potential"/>
    <property type="evidence" value="ECO:0000318"/>
    <property type="project" value="GO_Central"/>
</dbReference>
<dbReference type="GO" id="GO:1900744">
    <property type="term" value="P:regulation of p38MAPK cascade"/>
    <property type="evidence" value="ECO:0007669"/>
    <property type="project" value="Ensembl"/>
</dbReference>
<dbReference type="GO" id="GO:0051896">
    <property type="term" value="P:regulation of phosphatidylinositol 3-kinase/protein kinase B signal transduction"/>
    <property type="evidence" value="ECO:0007669"/>
    <property type="project" value="Ensembl"/>
</dbReference>
<dbReference type="GO" id="GO:0038009">
    <property type="term" value="P:regulation of signal transduction by receptor internalization"/>
    <property type="evidence" value="ECO:0007669"/>
    <property type="project" value="Ensembl"/>
</dbReference>
<dbReference type="GO" id="GO:0014819">
    <property type="term" value="P:regulation of skeletal muscle contraction"/>
    <property type="evidence" value="ECO:0007669"/>
    <property type="project" value="Ensembl"/>
</dbReference>
<dbReference type="GO" id="GO:1902305">
    <property type="term" value="P:regulation of sodium ion transmembrane transport"/>
    <property type="evidence" value="ECO:0007669"/>
    <property type="project" value="Ensembl"/>
</dbReference>
<dbReference type="GO" id="GO:0017015">
    <property type="term" value="P:regulation of transforming growth factor beta receptor signaling pathway"/>
    <property type="evidence" value="ECO:0007669"/>
    <property type="project" value="Ensembl"/>
</dbReference>
<dbReference type="GO" id="GO:0060373">
    <property type="term" value="P:regulation of ventricular cardiac muscle cell membrane depolarization"/>
    <property type="evidence" value="ECO:0007669"/>
    <property type="project" value="Ensembl"/>
</dbReference>
<dbReference type="GO" id="GO:0060307">
    <property type="term" value="P:regulation of ventricular cardiac muscle cell membrane repolarization"/>
    <property type="evidence" value="ECO:0007669"/>
    <property type="project" value="Ensembl"/>
</dbReference>
<dbReference type="GO" id="GO:0006641">
    <property type="term" value="P:triglyceride metabolic process"/>
    <property type="evidence" value="ECO:0007669"/>
    <property type="project" value="Ensembl"/>
</dbReference>
<dbReference type="InterPro" id="IPR001612">
    <property type="entry name" value="Caveolin"/>
</dbReference>
<dbReference type="InterPro" id="IPR018361">
    <property type="entry name" value="Caveolin_CS"/>
</dbReference>
<dbReference type="PANTHER" id="PTHR10844">
    <property type="entry name" value="CAVEOLIN"/>
    <property type="match status" value="1"/>
</dbReference>
<dbReference type="PANTHER" id="PTHR10844:SF16">
    <property type="entry name" value="CAVEOLIN-3"/>
    <property type="match status" value="1"/>
</dbReference>
<dbReference type="Pfam" id="PF01146">
    <property type="entry name" value="Caveolin"/>
    <property type="match status" value="1"/>
</dbReference>
<dbReference type="PROSITE" id="PS01210">
    <property type="entry name" value="CAVEOLIN"/>
    <property type="match status" value="1"/>
</dbReference>
<gene>
    <name type="primary">CAV3</name>
</gene>
<accession>Q2KI43</accession>
<name>CAV3_BOVIN</name>
<evidence type="ECO:0000250" key="1"/>
<evidence type="ECO:0000250" key="2">
    <source>
        <dbReference type="UniProtKB" id="P51637"/>
    </source>
</evidence>
<evidence type="ECO:0000250" key="3">
    <source>
        <dbReference type="UniProtKB" id="P51638"/>
    </source>
</evidence>
<evidence type="ECO:0000250" key="4">
    <source>
        <dbReference type="UniProtKB" id="P56538"/>
    </source>
</evidence>
<evidence type="ECO:0000250" key="5">
    <source>
        <dbReference type="UniProtKB" id="P56539"/>
    </source>
</evidence>
<evidence type="ECO:0000255" key="6"/>
<evidence type="ECO:0000305" key="7"/>
<protein>
    <recommendedName>
        <fullName>Caveolin-3</fullName>
    </recommendedName>
</protein>
<keyword id="KW-1003">Cell membrane</keyword>
<keyword id="KW-0333">Golgi apparatus</keyword>
<keyword id="KW-1017">Isopeptide bond</keyword>
<keyword id="KW-0472">Membrane</keyword>
<keyword id="KW-1185">Reference proteome</keyword>
<keyword id="KW-0832">Ubl conjugation</keyword>
<comment type="function">
    <text evidence="2 5">May act as a scaffolding protein within caveolar membranes. Interacts directly with G-protein alpha subunits and can functionally regulate their activity. May also regulate voltage-gated potassium channels. Plays a role in the sarcolemma repair mechanism of both skeletal muscle and cardiomyocytes that permits rapid resealing of membranes disrupted by mechanical stress. Mediates the recruitment of CAVIN2 and CAVIN3 proteins to the caveolae.</text>
</comment>
<comment type="subunit">
    <text evidence="2 3 5">Homooligomer. Interacts with DYSF. Interacts with DLG1 and KCNA5; forms a ternary complex. Interacts with DAG1 (via its C-terminal); the interaction prevents binding of DAG1 with DMD. Interacts with TRIM72. Interacts with MUSK; may regulate MUSK signaling. Interacts with POPDC1. Interacts with CAVIN1, CAVIN2 and CAVIN4.</text>
</comment>
<comment type="subcellular location">
    <subcellularLocation>
        <location evidence="1">Golgi apparatus membrane</location>
        <topology evidence="1">Peripheral membrane protein</topology>
    </subcellularLocation>
    <subcellularLocation>
        <location evidence="4">Cell membrane</location>
        <topology evidence="1">Peripheral membrane protein</topology>
    </subcellularLocation>
    <subcellularLocation>
        <location evidence="2">Membrane</location>
        <location evidence="2">Caveola</location>
        <topology evidence="1">Peripheral membrane protein</topology>
    </subcellularLocation>
    <subcellularLocation>
        <location evidence="2">Cell membrane</location>
        <location evidence="2">Sarcolemma</location>
    </subcellularLocation>
    <text evidence="1">Potential hairpin-like structure in the membrane. Membrane protein of caveolae (By similarity).</text>
</comment>
<comment type="PTM">
    <text evidence="1">Sumoylation with SUMO3 by PIAS4 may reduce agonist-induced internalization and desensitization of adrenergic receptor ABRD2.</text>
</comment>
<comment type="similarity">
    <text evidence="7">Belongs to the caveolin family.</text>
</comment>
<organism>
    <name type="scientific">Bos taurus</name>
    <name type="common">Bovine</name>
    <dbReference type="NCBI Taxonomy" id="9913"/>
    <lineage>
        <taxon>Eukaryota</taxon>
        <taxon>Metazoa</taxon>
        <taxon>Chordata</taxon>
        <taxon>Craniata</taxon>
        <taxon>Vertebrata</taxon>
        <taxon>Euteleostomi</taxon>
        <taxon>Mammalia</taxon>
        <taxon>Eutheria</taxon>
        <taxon>Laurasiatheria</taxon>
        <taxon>Artiodactyla</taxon>
        <taxon>Ruminantia</taxon>
        <taxon>Pecora</taxon>
        <taxon>Bovidae</taxon>
        <taxon>Bovinae</taxon>
        <taxon>Bos</taxon>
    </lineage>
</organism>
<sequence length="151" mass="17362">MMAEEHTDLEAQIVKDIHFKEIDLVNRDPKNINEDIVKVDFEDVIAEPVGTYSFDGVWKVSYTTFTVSKYWCYRLLSTLLGVPLALLWGFLFACISFCHIWAVVPCIKSYLIEIQCISHIYSLCIRTFCNPLFAALGQVCSNIKVMLRKEV</sequence>